<dbReference type="EC" id="3.4.19.3" evidence="1"/>
<dbReference type="EMBL" id="BA000017">
    <property type="protein sequence ID" value="BAB58852.1"/>
    <property type="molecule type" value="Genomic_DNA"/>
</dbReference>
<dbReference type="RefSeq" id="WP_000547838.1">
    <property type="nucleotide sequence ID" value="NC_002758.2"/>
</dbReference>
<dbReference type="SMR" id="P65676"/>
<dbReference type="MEROPS" id="C15.001"/>
<dbReference type="KEGG" id="sav:SAV2690"/>
<dbReference type="HOGENOM" id="CLU_043960_4_0_9"/>
<dbReference type="PhylomeDB" id="P65676"/>
<dbReference type="Proteomes" id="UP000002481">
    <property type="component" value="Chromosome"/>
</dbReference>
<dbReference type="GO" id="GO:0005829">
    <property type="term" value="C:cytosol"/>
    <property type="evidence" value="ECO:0007669"/>
    <property type="project" value="InterPro"/>
</dbReference>
<dbReference type="GO" id="GO:0016920">
    <property type="term" value="F:pyroglutamyl-peptidase activity"/>
    <property type="evidence" value="ECO:0007669"/>
    <property type="project" value="UniProtKB-UniRule"/>
</dbReference>
<dbReference type="GO" id="GO:0006508">
    <property type="term" value="P:proteolysis"/>
    <property type="evidence" value="ECO:0007669"/>
    <property type="project" value="UniProtKB-KW"/>
</dbReference>
<dbReference type="CDD" id="cd00501">
    <property type="entry name" value="Peptidase_C15"/>
    <property type="match status" value="1"/>
</dbReference>
<dbReference type="FunFam" id="3.40.630.20:FF:000001">
    <property type="entry name" value="Pyrrolidone-carboxylate peptidase"/>
    <property type="match status" value="1"/>
</dbReference>
<dbReference type="Gene3D" id="3.40.630.20">
    <property type="entry name" value="Peptidase C15, pyroglutamyl peptidase I-like"/>
    <property type="match status" value="1"/>
</dbReference>
<dbReference type="HAMAP" id="MF_00417">
    <property type="entry name" value="Pyrrolid_peptidase"/>
    <property type="match status" value="1"/>
</dbReference>
<dbReference type="InterPro" id="IPR000816">
    <property type="entry name" value="Peptidase_C15"/>
</dbReference>
<dbReference type="InterPro" id="IPR016125">
    <property type="entry name" value="Peptidase_C15-like"/>
</dbReference>
<dbReference type="InterPro" id="IPR036440">
    <property type="entry name" value="Peptidase_C15-like_sf"/>
</dbReference>
<dbReference type="InterPro" id="IPR029762">
    <property type="entry name" value="PGP-I_bact-type"/>
</dbReference>
<dbReference type="InterPro" id="IPR033694">
    <property type="entry name" value="PGPEP1_Cys_AS"/>
</dbReference>
<dbReference type="InterPro" id="IPR033693">
    <property type="entry name" value="PGPEP1_Glu_AS"/>
</dbReference>
<dbReference type="NCBIfam" id="NF009676">
    <property type="entry name" value="PRK13197.1"/>
    <property type="match status" value="1"/>
</dbReference>
<dbReference type="NCBIfam" id="TIGR00504">
    <property type="entry name" value="pyro_pdase"/>
    <property type="match status" value="1"/>
</dbReference>
<dbReference type="PANTHER" id="PTHR23402">
    <property type="entry name" value="PROTEASE FAMILY C15 PYROGLUTAMYL-PEPTIDASE I-RELATED"/>
    <property type="match status" value="1"/>
</dbReference>
<dbReference type="PANTHER" id="PTHR23402:SF1">
    <property type="entry name" value="PYROGLUTAMYL-PEPTIDASE I"/>
    <property type="match status" value="1"/>
</dbReference>
<dbReference type="Pfam" id="PF01470">
    <property type="entry name" value="Peptidase_C15"/>
    <property type="match status" value="1"/>
</dbReference>
<dbReference type="PIRSF" id="PIRSF015592">
    <property type="entry name" value="Prld-crbxl_pptds"/>
    <property type="match status" value="1"/>
</dbReference>
<dbReference type="PRINTS" id="PR00706">
    <property type="entry name" value="PYROGLUPTASE"/>
</dbReference>
<dbReference type="SUPFAM" id="SSF53182">
    <property type="entry name" value="Pyrrolidone carboxyl peptidase (pyroglutamate aminopeptidase)"/>
    <property type="match status" value="1"/>
</dbReference>
<dbReference type="PROSITE" id="PS01334">
    <property type="entry name" value="PYRASE_CYS"/>
    <property type="match status" value="1"/>
</dbReference>
<dbReference type="PROSITE" id="PS01333">
    <property type="entry name" value="PYRASE_GLU"/>
    <property type="match status" value="1"/>
</dbReference>
<name>PCP_STAAM</name>
<protein>
    <recommendedName>
        <fullName evidence="1">Pyrrolidone-carboxylate peptidase</fullName>
        <ecNumber evidence="1">3.4.19.3</ecNumber>
    </recommendedName>
    <alternativeName>
        <fullName evidence="1">5-oxoprolyl-peptidase</fullName>
    </alternativeName>
    <alternativeName>
        <fullName evidence="1">Pyroglutamyl-peptidase I</fullName>
        <shortName evidence="1">PGP-I</shortName>
        <shortName evidence="1">Pyrase</shortName>
    </alternativeName>
</protein>
<comment type="function">
    <text evidence="1">Removes 5-oxoproline from various penultimate amino acid residues except L-proline.</text>
</comment>
<comment type="catalytic activity">
    <reaction evidence="1">
        <text>Release of an N-terminal pyroglutamyl group from a polypeptide, the second amino acid generally not being Pro.</text>
        <dbReference type="EC" id="3.4.19.3"/>
    </reaction>
</comment>
<comment type="subunit">
    <text evidence="1">Homotetramer.</text>
</comment>
<comment type="subcellular location">
    <subcellularLocation>
        <location evidence="1">Cytoplasm</location>
    </subcellularLocation>
</comment>
<comment type="similarity">
    <text evidence="1">Belongs to the peptidase C15 family.</text>
</comment>
<keyword id="KW-0963">Cytoplasm</keyword>
<keyword id="KW-0378">Hydrolase</keyword>
<keyword id="KW-0645">Protease</keyword>
<keyword id="KW-0788">Thiol protease</keyword>
<proteinExistence type="inferred from homology"/>
<sequence>MHILVTGFAPFDNQNINPSWEAVTQLEDIIGTHTIDKLKLPTSFKKVDNIINKTLASNHYDVVLAIGQAGGRNAITPERVAINIDDARIPDNDDFQPIDQAIHLDGAPAYFSNLPVKAMTQSIINQGLPGALSNSAGTYVCNHVLYHLGYLQDKHYPHLRFGFIHVPYIPEQVIGKPDTPSMPLEKIVAGLTAAIEAISNDEDLRIALGTTE</sequence>
<gene>
    <name evidence="1" type="primary">pcp</name>
    <name type="ordered locus">SAV2690</name>
</gene>
<feature type="chain" id="PRO_0000184732" description="Pyrrolidone-carboxylate peptidase">
    <location>
        <begin position="1"/>
        <end position="212"/>
    </location>
</feature>
<feature type="active site" evidence="1">
    <location>
        <position position="78"/>
    </location>
</feature>
<feature type="active site" evidence="1">
    <location>
        <position position="141"/>
    </location>
</feature>
<feature type="active site" evidence="1">
    <location>
        <position position="165"/>
    </location>
</feature>
<organism>
    <name type="scientific">Staphylococcus aureus (strain Mu50 / ATCC 700699)</name>
    <dbReference type="NCBI Taxonomy" id="158878"/>
    <lineage>
        <taxon>Bacteria</taxon>
        <taxon>Bacillati</taxon>
        <taxon>Bacillota</taxon>
        <taxon>Bacilli</taxon>
        <taxon>Bacillales</taxon>
        <taxon>Staphylococcaceae</taxon>
        <taxon>Staphylococcus</taxon>
    </lineage>
</organism>
<accession>P65676</accession>
<accession>Q99QV1</accession>
<reference key="1">
    <citation type="journal article" date="2001" name="Lancet">
        <title>Whole genome sequencing of meticillin-resistant Staphylococcus aureus.</title>
        <authorList>
            <person name="Kuroda M."/>
            <person name="Ohta T."/>
            <person name="Uchiyama I."/>
            <person name="Baba T."/>
            <person name="Yuzawa H."/>
            <person name="Kobayashi I."/>
            <person name="Cui L."/>
            <person name="Oguchi A."/>
            <person name="Aoki K."/>
            <person name="Nagai Y."/>
            <person name="Lian J.-Q."/>
            <person name="Ito T."/>
            <person name="Kanamori M."/>
            <person name="Matsumaru H."/>
            <person name="Maruyama A."/>
            <person name="Murakami H."/>
            <person name="Hosoyama A."/>
            <person name="Mizutani-Ui Y."/>
            <person name="Takahashi N.K."/>
            <person name="Sawano T."/>
            <person name="Inoue R."/>
            <person name="Kaito C."/>
            <person name="Sekimizu K."/>
            <person name="Hirakawa H."/>
            <person name="Kuhara S."/>
            <person name="Goto S."/>
            <person name="Yabuzaki J."/>
            <person name="Kanehisa M."/>
            <person name="Yamashita A."/>
            <person name="Oshima K."/>
            <person name="Furuya K."/>
            <person name="Yoshino C."/>
            <person name="Shiba T."/>
            <person name="Hattori M."/>
            <person name="Ogasawara N."/>
            <person name="Hayashi H."/>
            <person name="Hiramatsu K."/>
        </authorList>
    </citation>
    <scope>NUCLEOTIDE SEQUENCE [LARGE SCALE GENOMIC DNA]</scope>
    <source>
        <strain>Mu50 / ATCC 700699</strain>
    </source>
</reference>
<evidence type="ECO:0000255" key="1">
    <source>
        <dbReference type="HAMAP-Rule" id="MF_00417"/>
    </source>
</evidence>